<proteinExistence type="inferred from homology"/>
<sequence>MTVGLFGGSFNPPHGGHALVAEIAIRRLKLDQLWWMVTPGNPLKDSRELAPLSERLRLSEEVAEDPRIKVTALEAAFHVRYTADTLALIRNANPDVYFVWVMGADNLASFHRWQRWREIAQNFPIAIIDRPGSTLSYLSSRMAQTFSDSRLDERYAPVLARRMPPAWTFIHGPRSSLSSTALRKVQLKKAPSKK</sequence>
<gene>
    <name evidence="1" type="primary">nadD</name>
    <name type="ordered locus">BAB1_1850</name>
</gene>
<organism>
    <name type="scientific">Brucella abortus (strain 2308)</name>
    <dbReference type="NCBI Taxonomy" id="359391"/>
    <lineage>
        <taxon>Bacteria</taxon>
        <taxon>Pseudomonadati</taxon>
        <taxon>Pseudomonadota</taxon>
        <taxon>Alphaproteobacteria</taxon>
        <taxon>Hyphomicrobiales</taxon>
        <taxon>Brucellaceae</taxon>
        <taxon>Brucella/Ochrobactrum group</taxon>
        <taxon>Brucella</taxon>
    </lineage>
</organism>
<comment type="function">
    <text evidence="1">Catalyzes the reversible adenylation of nicotinate mononucleotide (NaMN) to nicotinic acid adenine dinucleotide (NaAD).</text>
</comment>
<comment type="catalytic activity">
    <reaction evidence="1">
        <text>nicotinate beta-D-ribonucleotide + ATP + H(+) = deamido-NAD(+) + diphosphate</text>
        <dbReference type="Rhea" id="RHEA:22860"/>
        <dbReference type="ChEBI" id="CHEBI:15378"/>
        <dbReference type="ChEBI" id="CHEBI:30616"/>
        <dbReference type="ChEBI" id="CHEBI:33019"/>
        <dbReference type="ChEBI" id="CHEBI:57502"/>
        <dbReference type="ChEBI" id="CHEBI:58437"/>
        <dbReference type="EC" id="2.7.7.18"/>
    </reaction>
</comment>
<comment type="pathway">
    <text evidence="1">Cofactor biosynthesis; NAD(+) biosynthesis; deamido-NAD(+) from nicotinate D-ribonucleotide: step 1/1.</text>
</comment>
<comment type="similarity">
    <text evidence="1">Belongs to the NadD family.</text>
</comment>
<evidence type="ECO:0000255" key="1">
    <source>
        <dbReference type="HAMAP-Rule" id="MF_00244"/>
    </source>
</evidence>
<keyword id="KW-0067">ATP-binding</keyword>
<keyword id="KW-0520">NAD</keyword>
<keyword id="KW-0547">Nucleotide-binding</keyword>
<keyword id="KW-0548">Nucleotidyltransferase</keyword>
<keyword id="KW-0662">Pyridine nucleotide biosynthesis</keyword>
<keyword id="KW-1185">Reference proteome</keyword>
<keyword id="KW-0808">Transferase</keyword>
<feature type="chain" id="PRO_0000310101" description="Probable nicotinate-nucleotide adenylyltransferase">
    <location>
        <begin position="1"/>
        <end position="194"/>
    </location>
</feature>
<dbReference type="EC" id="2.7.7.18" evidence="1"/>
<dbReference type="EMBL" id="AM040264">
    <property type="protein sequence ID" value="CAJ11806.1"/>
    <property type="molecule type" value="Genomic_DNA"/>
</dbReference>
<dbReference type="SMR" id="Q2YLI8"/>
<dbReference type="STRING" id="359391.BAB1_1850"/>
<dbReference type="KEGG" id="bmf:BAB1_1850"/>
<dbReference type="PATRIC" id="fig|359391.11.peg.365"/>
<dbReference type="HOGENOM" id="CLU_069765_2_0_5"/>
<dbReference type="UniPathway" id="UPA00253">
    <property type="reaction ID" value="UER00332"/>
</dbReference>
<dbReference type="Proteomes" id="UP000002719">
    <property type="component" value="Chromosome I"/>
</dbReference>
<dbReference type="GO" id="GO:0005524">
    <property type="term" value="F:ATP binding"/>
    <property type="evidence" value="ECO:0007669"/>
    <property type="project" value="UniProtKB-KW"/>
</dbReference>
<dbReference type="GO" id="GO:0004515">
    <property type="term" value="F:nicotinate-nucleotide adenylyltransferase activity"/>
    <property type="evidence" value="ECO:0007669"/>
    <property type="project" value="UniProtKB-UniRule"/>
</dbReference>
<dbReference type="GO" id="GO:0009435">
    <property type="term" value="P:NAD biosynthetic process"/>
    <property type="evidence" value="ECO:0007669"/>
    <property type="project" value="UniProtKB-UniRule"/>
</dbReference>
<dbReference type="CDD" id="cd02165">
    <property type="entry name" value="NMNAT"/>
    <property type="match status" value="1"/>
</dbReference>
<dbReference type="Gene3D" id="3.40.50.620">
    <property type="entry name" value="HUPs"/>
    <property type="match status" value="1"/>
</dbReference>
<dbReference type="HAMAP" id="MF_00244">
    <property type="entry name" value="NaMN_adenylyltr"/>
    <property type="match status" value="1"/>
</dbReference>
<dbReference type="InterPro" id="IPR004821">
    <property type="entry name" value="Cyt_trans-like"/>
</dbReference>
<dbReference type="InterPro" id="IPR005248">
    <property type="entry name" value="NadD/NMNAT"/>
</dbReference>
<dbReference type="InterPro" id="IPR014729">
    <property type="entry name" value="Rossmann-like_a/b/a_fold"/>
</dbReference>
<dbReference type="NCBIfam" id="TIGR00482">
    <property type="entry name" value="nicotinate (nicotinamide) nucleotide adenylyltransferase"/>
    <property type="match status" value="1"/>
</dbReference>
<dbReference type="NCBIfam" id="NF000843">
    <property type="entry name" value="PRK00071.2-2"/>
    <property type="match status" value="1"/>
</dbReference>
<dbReference type="NCBIfam" id="NF000845">
    <property type="entry name" value="PRK00071.2-4"/>
    <property type="match status" value="1"/>
</dbReference>
<dbReference type="PANTHER" id="PTHR39321">
    <property type="entry name" value="NICOTINATE-NUCLEOTIDE ADENYLYLTRANSFERASE-RELATED"/>
    <property type="match status" value="1"/>
</dbReference>
<dbReference type="PANTHER" id="PTHR39321:SF3">
    <property type="entry name" value="PHOSPHOPANTETHEINE ADENYLYLTRANSFERASE"/>
    <property type="match status" value="1"/>
</dbReference>
<dbReference type="Pfam" id="PF01467">
    <property type="entry name" value="CTP_transf_like"/>
    <property type="match status" value="1"/>
</dbReference>
<dbReference type="SUPFAM" id="SSF52374">
    <property type="entry name" value="Nucleotidylyl transferase"/>
    <property type="match status" value="1"/>
</dbReference>
<accession>Q2YLI8</accession>
<name>NADD_BRUA2</name>
<protein>
    <recommendedName>
        <fullName evidence="1">Probable nicotinate-nucleotide adenylyltransferase</fullName>
        <ecNumber evidence="1">2.7.7.18</ecNumber>
    </recommendedName>
    <alternativeName>
        <fullName evidence="1">Deamido-NAD(+) diphosphorylase</fullName>
    </alternativeName>
    <alternativeName>
        <fullName evidence="1">Deamido-NAD(+) pyrophosphorylase</fullName>
    </alternativeName>
    <alternativeName>
        <fullName evidence="1">Nicotinate mononucleotide adenylyltransferase</fullName>
        <shortName evidence="1">NaMN adenylyltransferase</shortName>
    </alternativeName>
</protein>
<reference key="1">
    <citation type="journal article" date="2005" name="Infect. Immun.">
        <title>Whole-genome analyses of speciation events in pathogenic Brucellae.</title>
        <authorList>
            <person name="Chain P.S."/>
            <person name="Comerci D.J."/>
            <person name="Tolmasky M.E."/>
            <person name="Larimer F.W."/>
            <person name="Malfatti S.A."/>
            <person name="Vergez L.M."/>
            <person name="Aguero F."/>
            <person name="Land M.L."/>
            <person name="Ugalde R.A."/>
            <person name="Garcia E."/>
        </authorList>
    </citation>
    <scope>NUCLEOTIDE SEQUENCE [LARGE SCALE GENOMIC DNA]</scope>
    <source>
        <strain>2308</strain>
    </source>
</reference>